<dbReference type="EMBL" id="AM711867">
    <property type="protein sequence ID" value="CAN01248.1"/>
    <property type="molecule type" value="Genomic_DNA"/>
</dbReference>
<dbReference type="RefSeq" id="WP_012037890.1">
    <property type="nucleotide sequence ID" value="NC_009480.1"/>
</dbReference>
<dbReference type="SMR" id="A5CQ95"/>
<dbReference type="GeneID" id="92947172"/>
<dbReference type="KEGG" id="cmi:CMM_1204"/>
<dbReference type="eggNOG" id="COG1615">
    <property type="taxonomic scope" value="Bacteria"/>
</dbReference>
<dbReference type="HOGENOM" id="CLU_007733_1_0_11"/>
<dbReference type="Proteomes" id="UP000001564">
    <property type="component" value="Chromosome"/>
</dbReference>
<dbReference type="GO" id="GO:0005576">
    <property type="term" value="C:extracellular region"/>
    <property type="evidence" value="ECO:0007669"/>
    <property type="project" value="TreeGrafter"/>
</dbReference>
<dbReference type="GO" id="GO:0005886">
    <property type="term" value="C:plasma membrane"/>
    <property type="evidence" value="ECO:0007669"/>
    <property type="project" value="UniProtKB-SubCell"/>
</dbReference>
<dbReference type="HAMAP" id="MF_01600">
    <property type="entry name" value="UPF0182"/>
    <property type="match status" value="1"/>
</dbReference>
<dbReference type="InterPro" id="IPR005372">
    <property type="entry name" value="UPF0182"/>
</dbReference>
<dbReference type="PANTHER" id="PTHR39344">
    <property type="entry name" value="UPF0182 PROTEIN SLL1060"/>
    <property type="match status" value="1"/>
</dbReference>
<dbReference type="PANTHER" id="PTHR39344:SF1">
    <property type="entry name" value="UPF0182 PROTEIN SLL1060"/>
    <property type="match status" value="1"/>
</dbReference>
<dbReference type="Pfam" id="PF03699">
    <property type="entry name" value="UPF0182"/>
    <property type="match status" value="1"/>
</dbReference>
<evidence type="ECO:0000255" key="1">
    <source>
        <dbReference type="HAMAP-Rule" id="MF_01600"/>
    </source>
</evidence>
<evidence type="ECO:0000256" key="2">
    <source>
        <dbReference type="SAM" id="MobiDB-lite"/>
    </source>
</evidence>
<accession>A5CQ95</accession>
<protein>
    <recommendedName>
        <fullName evidence="1">UPF0182 protein CMM_1204</fullName>
    </recommendedName>
</protein>
<keyword id="KW-1003">Cell membrane</keyword>
<keyword id="KW-0472">Membrane</keyword>
<keyword id="KW-0812">Transmembrane</keyword>
<keyword id="KW-1133">Transmembrane helix</keyword>
<comment type="subcellular location">
    <subcellularLocation>
        <location evidence="1">Cell membrane</location>
        <topology evidence="1">Multi-pass membrane protein</topology>
    </subcellularLocation>
</comment>
<comment type="similarity">
    <text evidence="1">Belongs to the UPF0182 family.</text>
</comment>
<organism>
    <name type="scientific">Clavibacter michiganensis subsp. michiganensis (strain NCPPB 382)</name>
    <dbReference type="NCBI Taxonomy" id="443906"/>
    <lineage>
        <taxon>Bacteria</taxon>
        <taxon>Bacillati</taxon>
        <taxon>Actinomycetota</taxon>
        <taxon>Actinomycetes</taxon>
        <taxon>Micrococcales</taxon>
        <taxon>Microbacteriaceae</taxon>
        <taxon>Clavibacter</taxon>
    </lineage>
</organism>
<name>Y1204_CLAM3</name>
<reference key="1">
    <citation type="journal article" date="2008" name="J. Bacteriol.">
        <title>The genome sequence of the tomato-pathogenic actinomycete Clavibacter michiganensis subsp. michiganensis NCPPB382 reveals a large island involved in pathogenicity.</title>
        <authorList>
            <person name="Gartemann K.-H."/>
            <person name="Abt B."/>
            <person name="Bekel T."/>
            <person name="Burger A."/>
            <person name="Engemann J."/>
            <person name="Fluegel M."/>
            <person name="Gaigalat L."/>
            <person name="Goesmann A."/>
            <person name="Graefen I."/>
            <person name="Kalinowski J."/>
            <person name="Kaup O."/>
            <person name="Kirchner O."/>
            <person name="Krause L."/>
            <person name="Linke B."/>
            <person name="McHardy A."/>
            <person name="Meyer F."/>
            <person name="Pohle S."/>
            <person name="Rueckert C."/>
            <person name="Schneiker S."/>
            <person name="Zellermann E.-M."/>
            <person name="Puehler A."/>
            <person name="Eichenlaub R."/>
            <person name="Kaiser O."/>
            <person name="Bartels D."/>
        </authorList>
    </citation>
    <scope>NUCLEOTIDE SEQUENCE [LARGE SCALE GENOMIC DNA]</scope>
    <source>
        <strain>NCPPB 382</strain>
    </source>
</reference>
<proteinExistence type="inferred from homology"/>
<gene>
    <name type="ordered locus">CMM_1204</name>
</gene>
<sequence>MTSTSARPARRSRAPLAITAAIIAALVIAFFIFAGFYADVLWYDQLGYLGVLLTQWGAGIALFLVGFLAMAIPVFVSIQVAYRSRPVYAKLNSQLDRYQQVVEPLRRLAMFAIPAVFGLFAGVSASSGWQRTLLWLNRTPSGTVDPQFQLDTSFYMFELPFYHAVVGFASAVVIISMLGVLATSYLYGAVRFTGREVRISKSSRIQIAITAGVYFLLQGVSIWLDQYSSVVNNANGGLFTGAAYSDVNAVIPGRAILAGIAGVVALFFIVTAVIGRWRLPIIGTAGLIVASILVGTAYPAIVQRFQVEPNERALESQYYERNIEATRQAYGLADIEEIPYDATTDTTPGALREDAATTANIRILDPAVVGDAFSQLQQFRQYYQFGDNLDVDRYQIDGRVQDTVVAVRELSPTNTGTSWVNQHLVYTHGYSLVAAYGTQRTSDGQPVFLESGIPASGDLGDFEPRVYFGENSPDYSIVGGPESGDKVELDYPSGVDGADETYTTFQGDGGPKVDNVFKRLIYALKFQSEQIFLANQINDQSQIIYDRDPAERVGKVAPYLTIDKDPYPSVVDGRVVWIVDGYTTSDQYPYSQRQDMSRLIADSQQTQPLVPTDQINYIRNSVKATVDAYDGKVTLYAWDTDDPILKTWQKVFPSTLKPISDISGELMSHLRFPADMFKVQRAVLGKYHVTDPGSIYSNQDLWTTPNDPTATTEAGTPASLQPPYYLTMQMPGQDAPRFSLYSTFIPPATQDTSRSVLTGYLGVDSDAGSTAGEKAADYGKLRLLTLPNDDTIPAPTQIQNNFNSDTNVANQLNLLERGGRTSVVRGNLLTLPVGGGLLYVQPVYVRSTGDTSYPLLRKVLVAFGDKIAFEDTLDAALDSIFEGDSGATAGDEDVVPTTPVDGGTGDGATDGATDGGTGSTPTPAPTTSPSAPAQDVQAALDAANTALQERQAAYASGDLVAAAQADQRFTEAVQRAYELSQQQ</sequence>
<feature type="chain" id="PRO_1000069337" description="UPF0182 protein CMM_1204">
    <location>
        <begin position="1"/>
        <end position="983"/>
    </location>
</feature>
<feature type="transmembrane region" description="Helical" evidence="1">
    <location>
        <begin position="16"/>
        <end position="36"/>
    </location>
</feature>
<feature type="transmembrane region" description="Helical" evidence="1">
    <location>
        <begin position="56"/>
        <end position="76"/>
    </location>
</feature>
<feature type="transmembrane region" description="Helical" evidence="1">
    <location>
        <begin position="108"/>
        <end position="128"/>
    </location>
</feature>
<feature type="transmembrane region" description="Helical" evidence="1">
    <location>
        <begin position="161"/>
        <end position="181"/>
    </location>
</feature>
<feature type="transmembrane region" description="Helical" evidence="1">
    <location>
        <begin position="205"/>
        <end position="225"/>
    </location>
</feature>
<feature type="transmembrane region" description="Helical" evidence="1">
    <location>
        <begin position="255"/>
        <end position="275"/>
    </location>
</feature>
<feature type="transmembrane region" description="Helical" evidence="1">
    <location>
        <begin position="281"/>
        <end position="301"/>
    </location>
</feature>
<feature type="region of interest" description="Disordered" evidence="2">
    <location>
        <begin position="699"/>
        <end position="718"/>
    </location>
</feature>
<feature type="region of interest" description="Disordered" evidence="2">
    <location>
        <begin position="884"/>
        <end position="936"/>
    </location>
</feature>
<feature type="compositionally biased region" description="Polar residues" evidence="2">
    <location>
        <begin position="699"/>
        <end position="714"/>
    </location>
</feature>
<feature type="compositionally biased region" description="Gly residues" evidence="2">
    <location>
        <begin position="902"/>
        <end position="918"/>
    </location>
</feature>
<feature type="compositionally biased region" description="Low complexity" evidence="2">
    <location>
        <begin position="919"/>
        <end position="933"/>
    </location>
</feature>